<sequence length="209" mass="23883">MNIANYTLKVKGKTLLQDTDLHFSSGKINHVVGKNGVGKSQLAKDFLLNNSKRIGRDIRQNVSLISSSSNIPNDVSKDFLLHFLSKKFDAKMIDKIAYLLNLDNIDGKVLIKNLSDGQKQKLKLLSFLLEDKNIIVLDEITNSLDKKTVIEIHGFLNKYIQENPEKIIINITHDLSDLKAIEGDYYIFNHQEIQQYHSVDKLIEVYINE</sequence>
<feature type="chain" id="PRO_0000370196" description="Probable peptide export ATP-binding protein YydI">
    <location>
        <begin position="1"/>
        <end position="209"/>
    </location>
</feature>
<feature type="domain" description="ABC transporter" evidence="2">
    <location>
        <begin position="1"/>
        <end position="207"/>
    </location>
</feature>
<feature type="binding site" evidence="2">
    <location>
        <begin position="33"/>
        <end position="40"/>
    </location>
    <ligand>
        <name>ATP</name>
        <dbReference type="ChEBI" id="CHEBI:30616"/>
    </ligand>
</feature>
<name>YYDI_BACSU</name>
<dbReference type="EMBL" id="D78193">
    <property type="protein sequence ID" value="BAA11273.1"/>
    <property type="molecule type" value="Genomic_DNA"/>
</dbReference>
<dbReference type="EMBL" id="AL009126">
    <property type="protein sequence ID" value="CAB16052.1"/>
    <property type="molecule type" value="Genomic_DNA"/>
</dbReference>
<dbReference type="PIR" id="G70091">
    <property type="entry name" value="G70091"/>
</dbReference>
<dbReference type="RefSeq" id="WP_003242913.1">
    <property type="nucleotide sequence ID" value="NZ_OZ025638.1"/>
</dbReference>
<dbReference type="SMR" id="Q45593"/>
<dbReference type="FunCoup" id="Q45593">
    <property type="interactions" value="141"/>
</dbReference>
<dbReference type="STRING" id="224308.BSU40150"/>
<dbReference type="TCDB" id="3.A.1.133.1">
    <property type="family name" value="the atp-binding cassette (abc) superfamily"/>
</dbReference>
<dbReference type="PaxDb" id="224308-BSU40150"/>
<dbReference type="EnsemblBacteria" id="CAB16052">
    <property type="protein sequence ID" value="CAB16052"/>
    <property type="gene ID" value="BSU_40150"/>
</dbReference>
<dbReference type="GeneID" id="937743"/>
<dbReference type="KEGG" id="bsu:BSU40150"/>
<dbReference type="PATRIC" id="fig|224308.179.peg.4343"/>
<dbReference type="eggNOG" id="COG1131">
    <property type="taxonomic scope" value="Bacteria"/>
</dbReference>
<dbReference type="InParanoid" id="Q45593"/>
<dbReference type="OrthoDB" id="2233388at2"/>
<dbReference type="PhylomeDB" id="Q45593"/>
<dbReference type="BioCyc" id="BSUB:BSU40150-MONOMER"/>
<dbReference type="Proteomes" id="UP000001570">
    <property type="component" value="Chromosome"/>
</dbReference>
<dbReference type="GO" id="GO:0043190">
    <property type="term" value="C:ATP-binding cassette (ABC) transporter complex"/>
    <property type="evidence" value="ECO:0000318"/>
    <property type="project" value="GO_Central"/>
</dbReference>
<dbReference type="GO" id="GO:0005524">
    <property type="term" value="F:ATP binding"/>
    <property type="evidence" value="ECO:0000318"/>
    <property type="project" value="GO_Central"/>
</dbReference>
<dbReference type="GO" id="GO:0016887">
    <property type="term" value="F:ATP hydrolysis activity"/>
    <property type="evidence" value="ECO:0007669"/>
    <property type="project" value="InterPro"/>
</dbReference>
<dbReference type="GO" id="GO:0042626">
    <property type="term" value="F:ATPase-coupled transmembrane transporter activity"/>
    <property type="evidence" value="ECO:0000318"/>
    <property type="project" value="GO_Central"/>
</dbReference>
<dbReference type="CDD" id="cd00267">
    <property type="entry name" value="ABC_ATPase"/>
    <property type="match status" value="1"/>
</dbReference>
<dbReference type="FunFam" id="3.40.50.300:FF:002001">
    <property type="entry name" value="Peptide ABC transporter ATP-binding protein"/>
    <property type="match status" value="1"/>
</dbReference>
<dbReference type="Gene3D" id="3.40.50.300">
    <property type="entry name" value="P-loop containing nucleotide triphosphate hydrolases"/>
    <property type="match status" value="1"/>
</dbReference>
<dbReference type="InterPro" id="IPR003593">
    <property type="entry name" value="AAA+_ATPase"/>
</dbReference>
<dbReference type="InterPro" id="IPR003439">
    <property type="entry name" value="ABC_transporter-like_ATP-bd"/>
</dbReference>
<dbReference type="InterPro" id="IPR027417">
    <property type="entry name" value="P-loop_NTPase"/>
</dbReference>
<dbReference type="PANTHER" id="PTHR43158">
    <property type="entry name" value="SKFA PEPTIDE EXPORT ATP-BINDING PROTEIN SKFE"/>
    <property type="match status" value="1"/>
</dbReference>
<dbReference type="PANTHER" id="PTHR43158:SF2">
    <property type="entry name" value="SKFA PEPTIDE EXPORT ATP-BINDING PROTEIN SKFE"/>
    <property type="match status" value="1"/>
</dbReference>
<dbReference type="Pfam" id="PF00005">
    <property type="entry name" value="ABC_tran"/>
    <property type="match status" value="1"/>
</dbReference>
<dbReference type="SMART" id="SM00382">
    <property type="entry name" value="AAA"/>
    <property type="match status" value="1"/>
</dbReference>
<dbReference type="SUPFAM" id="SSF52540">
    <property type="entry name" value="P-loop containing nucleoside triphosphate hydrolases"/>
    <property type="match status" value="1"/>
</dbReference>
<dbReference type="PROSITE" id="PS50893">
    <property type="entry name" value="ABC_TRANSPORTER_2"/>
    <property type="match status" value="1"/>
</dbReference>
<organism>
    <name type="scientific">Bacillus subtilis (strain 168)</name>
    <dbReference type="NCBI Taxonomy" id="224308"/>
    <lineage>
        <taxon>Bacteria</taxon>
        <taxon>Bacillati</taxon>
        <taxon>Bacillota</taxon>
        <taxon>Bacilli</taxon>
        <taxon>Bacillales</taxon>
        <taxon>Bacillaceae</taxon>
        <taxon>Bacillus</taxon>
    </lineage>
</organism>
<protein>
    <recommendedName>
        <fullName>Probable peptide export ATP-binding protein YydI</fullName>
    </recommendedName>
</protein>
<proteinExistence type="evidence at transcript level"/>
<keyword id="KW-0067">ATP-binding</keyword>
<keyword id="KW-0547">Nucleotide-binding</keyword>
<keyword id="KW-1185">Reference proteome</keyword>
<keyword id="KW-0813">Transport</keyword>
<evidence type="ECO:0000250" key="1"/>
<evidence type="ECO:0000255" key="2">
    <source>
        <dbReference type="PROSITE-ProRule" id="PRU00434"/>
    </source>
</evidence>
<evidence type="ECO:0000269" key="3">
    <source>
    </source>
</evidence>
<evidence type="ECO:0000269" key="4">
    <source>
    </source>
</evidence>
<evidence type="ECO:0000305" key="5"/>
<reference key="1">
    <citation type="journal article" date="1997" name="DNA Res.">
        <title>Sequence analysis of the 36-kb region between gntZ and trnY genes of Bacillus subtilis genome.</title>
        <authorList>
            <person name="Kasahara Y."/>
            <person name="Nakai S."/>
            <person name="Ogasawara N."/>
        </authorList>
    </citation>
    <scope>NUCLEOTIDE SEQUENCE [GENOMIC DNA]</scope>
    <source>
        <strain>168</strain>
    </source>
</reference>
<reference key="2">
    <citation type="journal article" date="1997" name="Nature">
        <title>The complete genome sequence of the Gram-positive bacterium Bacillus subtilis.</title>
        <authorList>
            <person name="Kunst F."/>
            <person name="Ogasawara N."/>
            <person name="Moszer I."/>
            <person name="Albertini A.M."/>
            <person name="Alloni G."/>
            <person name="Azevedo V."/>
            <person name="Bertero M.G."/>
            <person name="Bessieres P."/>
            <person name="Bolotin A."/>
            <person name="Borchert S."/>
            <person name="Borriss R."/>
            <person name="Boursier L."/>
            <person name="Brans A."/>
            <person name="Braun M."/>
            <person name="Brignell S.C."/>
            <person name="Bron S."/>
            <person name="Brouillet S."/>
            <person name="Bruschi C.V."/>
            <person name="Caldwell B."/>
            <person name="Capuano V."/>
            <person name="Carter N.M."/>
            <person name="Choi S.-K."/>
            <person name="Codani J.-J."/>
            <person name="Connerton I.F."/>
            <person name="Cummings N.J."/>
            <person name="Daniel R.A."/>
            <person name="Denizot F."/>
            <person name="Devine K.M."/>
            <person name="Duesterhoeft A."/>
            <person name="Ehrlich S.D."/>
            <person name="Emmerson P.T."/>
            <person name="Entian K.-D."/>
            <person name="Errington J."/>
            <person name="Fabret C."/>
            <person name="Ferrari E."/>
            <person name="Foulger D."/>
            <person name="Fritz C."/>
            <person name="Fujita M."/>
            <person name="Fujita Y."/>
            <person name="Fuma S."/>
            <person name="Galizzi A."/>
            <person name="Galleron N."/>
            <person name="Ghim S.-Y."/>
            <person name="Glaser P."/>
            <person name="Goffeau A."/>
            <person name="Golightly E.J."/>
            <person name="Grandi G."/>
            <person name="Guiseppi G."/>
            <person name="Guy B.J."/>
            <person name="Haga K."/>
            <person name="Haiech J."/>
            <person name="Harwood C.R."/>
            <person name="Henaut A."/>
            <person name="Hilbert H."/>
            <person name="Holsappel S."/>
            <person name="Hosono S."/>
            <person name="Hullo M.-F."/>
            <person name="Itaya M."/>
            <person name="Jones L.-M."/>
            <person name="Joris B."/>
            <person name="Karamata D."/>
            <person name="Kasahara Y."/>
            <person name="Klaerr-Blanchard M."/>
            <person name="Klein C."/>
            <person name="Kobayashi Y."/>
            <person name="Koetter P."/>
            <person name="Koningstein G."/>
            <person name="Krogh S."/>
            <person name="Kumano M."/>
            <person name="Kurita K."/>
            <person name="Lapidus A."/>
            <person name="Lardinois S."/>
            <person name="Lauber J."/>
            <person name="Lazarevic V."/>
            <person name="Lee S.-M."/>
            <person name="Levine A."/>
            <person name="Liu H."/>
            <person name="Masuda S."/>
            <person name="Mauel C."/>
            <person name="Medigue C."/>
            <person name="Medina N."/>
            <person name="Mellado R.P."/>
            <person name="Mizuno M."/>
            <person name="Moestl D."/>
            <person name="Nakai S."/>
            <person name="Noback M."/>
            <person name="Noone D."/>
            <person name="O'Reilly M."/>
            <person name="Ogawa K."/>
            <person name="Ogiwara A."/>
            <person name="Oudega B."/>
            <person name="Park S.-H."/>
            <person name="Parro V."/>
            <person name="Pohl T.M."/>
            <person name="Portetelle D."/>
            <person name="Porwollik S."/>
            <person name="Prescott A.M."/>
            <person name="Presecan E."/>
            <person name="Pujic P."/>
            <person name="Purnelle B."/>
            <person name="Rapoport G."/>
            <person name="Rey M."/>
            <person name="Reynolds S."/>
            <person name="Rieger M."/>
            <person name="Rivolta C."/>
            <person name="Rocha E."/>
            <person name="Roche B."/>
            <person name="Rose M."/>
            <person name="Sadaie Y."/>
            <person name="Sato T."/>
            <person name="Scanlan E."/>
            <person name="Schleich S."/>
            <person name="Schroeter R."/>
            <person name="Scoffone F."/>
            <person name="Sekiguchi J."/>
            <person name="Sekowska A."/>
            <person name="Seror S.J."/>
            <person name="Serror P."/>
            <person name="Shin B.-S."/>
            <person name="Soldo B."/>
            <person name="Sorokin A."/>
            <person name="Tacconi E."/>
            <person name="Takagi T."/>
            <person name="Takahashi H."/>
            <person name="Takemaru K."/>
            <person name="Takeuchi M."/>
            <person name="Tamakoshi A."/>
            <person name="Tanaka T."/>
            <person name="Terpstra P."/>
            <person name="Tognoni A."/>
            <person name="Tosato V."/>
            <person name="Uchiyama S."/>
            <person name="Vandenbol M."/>
            <person name="Vannier F."/>
            <person name="Vassarotti A."/>
            <person name="Viari A."/>
            <person name="Wambutt R."/>
            <person name="Wedler E."/>
            <person name="Wedler H."/>
            <person name="Weitzenegger T."/>
            <person name="Winters P."/>
            <person name="Wipat A."/>
            <person name="Yamamoto H."/>
            <person name="Yamane K."/>
            <person name="Yasumoto K."/>
            <person name="Yata K."/>
            <person name="Yoshida K."/>
            <person name="Yoshikawa H.-F."/>
            <person name="Zumstein E."/>
            <person name="Yoshikawa H."/>
            <person name="Danchin A."/>
        </authorList>
    </citation>
    <scope>NUCLEOTIDE SEQUENCE [LARGE SCALE GENOMIC DNA]</scope>
    <source>
        <strain>168</strain>
    </source>
</reference>
<reference key="3">
    <citation type="journal article" date="2005" name="J. Bacteriol.">
        <title>The Rok protein of Bacillus subtilis represses genes for cell surface and extracellular functions.</title>
        <authorList>
            <person name="Albano M."/>
            <person name="Smits W.K."/>
            <person name="Ho L.T."/>
            <person name="Kraigher B."/>
            <person name="Mandic-Mulec I."/>
            <person name="Kuipers O.P."/>
            <person name="Dubnau D."/>
        </authorList>
    </citation>
    <scope>TRANSCRIPTION REGULATION</scope>
    <scope>OPERON SUGGESTION</scope>
    <source>
        <strain>168</strain>
    </source>
</reference>
<reference key="4">
    <citation type="journal article" date="2007" name="J. Bacteriol.">
        <title>The yydFGHIJ operon of Bacillus subtilis encodes a peptide that induces the LiaRS two-component system.</title>
        <authorList>
            <person name="Butcher B.G."/>
            <person name="Lin Y.-P."/>
            <person name="Helmann J.D."/>
        </authorList>
    </citation>
    <scope>SUGGESTION OF FUNCTION</scope>
    <scope>OPERON STRUCTURE</scope>
    <scope>DISRUPTION PHENOTYPE</scope>
    <source>
        <strain>168</strain>
    </source>
</reference>
<accession>Q45593</accession>
<accession>Q794X2</accession>
<gene>
    <name type="primary">yydI</name>
    <name type="ordered locus">BSU40150</name>
</gene>
<comment type="function">
    <text evidence="1 5">Suggested to be part of an ABC transporter complex YydIJ involved in export of the modified peptide YydF (Probable). Responsible for energy coupling to the transport system (By similarity).</text>
</comment>
<comment type="subunit">
    <text evidence="5">The complex is composed of two ATP-binding proteins (YydI), two transmembrane proteins (YydJ).</text>
</comment>
<comment type="induction">
    <text evidence="3 4">Transcriptionally repressed by rok (PubMed:15743949), this was not found to be the case in another study (PubMed:17921301).</text>
</comment>
<comment type="disruption phenotype">
    <text evidence="4">Up-regulates expression of the LiaRS two-component regulatory system; this effect is more pronounced on modified competence medium than on rich or sporulation medium.</text>
</comment>
<comment type="similarity">
    <text evidence="5">Belongs to the ABC transporter superfamily.</text>
</comment>